<protein>
    <recommendedName>
        <fullName>P2Y purinoceptor 3</fullName>
        <shortName>P2Y3</shortName>
    </recommendedName>
    <alternativeName>
        <fullName>Nucleoside diphosphate receptor</fullName>
    </alternativeName>
</protein>
<evidence type="ECO:0000255" key="1"/>
<evidence type="ECO:0000255" key="2">
    <source>
        <dbReference type="PROSITE-ProRule" id="PRU00521"/>
    </source>
</evidence>
<organism>
    <name type="scientific">Gallus gallus</name>
    <name type="common">Chicken</name>
    <dbReference type="NCBI Taxonomy" id="9031"/>
    <lineage>
        <taxon>Eukaryota</taxon>
        <taxon>Metazoa</taxon>
        <taxon>Chordata</taxon>
        <taxon>Craniata</taxon>
        <taxon>Vertebrata</taxon>
        <taxon>Euteleostomi</taxon>
        <taxon>Archelosauria</taxon>
        <taxon>Archosauria</taxon>
        <taxon>Dinosauria</taxon>
        <taxon>Saurischia</taxon>
        <taxon>Theropoda</taxon>
        <taxon>Coelurosauria</taxon>
        <taxon>Aves</taxon>
        <taxon>Neognathae</taxon>
        <taxon>Galloanserae</taxon>
        <taxon>Galliformes</taxon>
        <taxon>Phasianidae</taxon>
        <taxon>Phasianinae</taxon>
        <taxon>Gallus</taxon>
    </lineage>
</organism>
<reference key="1">
    <citation type="journal article" date="1996" name="Mol. Pharmacol.">
        <title>A novel G protein-coupled P2 purinoceptor (P2Y3) activated preferentially by nucleoside diphosphates.</title>
        <authorList>
            <person name="Webb T.E."/>
            <person name="Henderson D."/>
            <person name="King B.F."/>
            <person name="Wang S."/>
            <person name="Simon J."/>
            <person name="Bateson A.N."/>
            <person name="Burnstock G."/>
            <person name="Barnard E.A."/>
        </authorList>
    </citation>
    <scope>NUCLEOTIDE SEQUENCE [MRNA]</scope>
    <source>
        <tissue>Brain</tissue>
    </source>
</reference>
<accession>Q98907</accession>
<proteinExistence type="evidence at transcript level"/>
<feature type="chain" id="PRO_0000070017" description="P2Y purinoceptor 3">
    <location>
        <begin position="1"/>
        <end position="328"/>
    </location>
</feature>
<feature type="topological domain" description="Extracellular" evidence="1">
    <location>
        <begin position="1"/>
        <end position="22"/>
    </location>
</feature>
<feature type="transmembrane region" description="Helical; Name=1" evidence="1">
    <location>
        <begin position="23"/>
        <end position="43"/>
    </location>
</feature>
<feature type="topological domain" description="Cytoplasmic" evidence="1">
    <location>
        <begin position="44"/>
        <end position="57"/>
    </location>
</feature>
<feature type="transmembrane region" description="Helical; Name=2" evidence="1">
    <location>
        <begin position="58"/>
        <end position="78"/>
    </location>
</feature>
<feature type="topological domain" description="Extracellular" evidence="1">
    <location>
        <begin position="79"/>
        <end position="96"/>
    </location>
</feature>
<feature type="transmembrane region" description="Helical; Name=3" evidence="1">
    <location>
        <begin position="97"/>
        <end position="117"/>
    </location>
</feature>
<feature type="topological domain" description="Cytoplasmic" evidence="1">
    <location>
        <begin position="118"/>
        <end position="139"/>
    </location>
</feature>
<feature type="transmembrane region" description="Helical; Name=4" evidence="1">
    <location>
        <begin position="140"/>
        <end position="160"/>
    </location>
</feature>
<feature type="topological domain" description="Extracellular" evidence="1">
    <location>
        <begin position="161"/>
        <end position="189"/>
    </location>
</feature>
<feature type="transmembrane region" description="Helical; Name=5" evidence="1">
    <location>
        <begin position="190"/>
        <end position="210"/>
    </location>
</feature>
<feature type="topological domain" description="Cytoplasmic" evidence="1">
    <location>
        <begin position="211"/>
        <end position="231"/>
    </location>
</feature>
<feature type="transmembrane region" description="Helical; Name=6" evidence="1">
    <location>
        <begin position="232"/>
        <end position="252"/>
    </location>
</feature>
<feature type="topological domain" description="Extracellular" evidence="1">
    <location>
        <begin position="253"/>
        <end position="275"/>
    </location>
</feature>
<feature type="transmembrane region" description="Helical; Name=7" evidence="1">
    <location>
        <begin position="276"/>
        <end position="298"/>
    </location>
</feature>
<feature type="topological domain" description="Cytoplasmic" evidence="1">
    <location>
        <begin position="299"/>
        <end position="323"/>
    </location>
</feature>
<feature type="glycosylation site" description="N-linked (GlcNAc...) asparagine" evidence="1">
    <location>
        <position position="5"/>
    </location>
</feature>
<feature type="disulfide bond" evidence="2">
    <location>
        <begin position="94"/>
        <end position="172"/>
    </location>
</feature>
<sequence>MSMANFTGGRNSCTFHEEFKQVLLPLVYSVVFLLGLPLNAVVIGQIWLARKALTRTTIYMLNLAMADLLYVCSLPLLIYNYTQKDYWPFGDFTCKFVRFQFYTNLHGSILFLTCISVQRYMGICHPLASWHKKKGKKLTWLVCAAVWFIVIAQCLPTFVFASTGTQRNRTVCYDLSPPDRSTSYFPYGITLTITGFLLPFAAILACYCSMARILCQKDELIGLAVHKKKDKAVRMIIIVVIVFSISFFPFHLTKTIYLIVRSSASLPCPTLQAFAIAYKCTRPFASMNSVLDPILFYFTQRKFRESTRYLLDKMSSKWRQDHCISYGS</sequence>
<gene>
    <name type="primary">P2RY3</name>
</gene>
<keyword id="KW-1003">Cell membrane</keyword>
<keyword id="KW-1015">Disulfide bond</keyword>
<keyword id="KW-0297">G-protein coupled receptor</keyword>
<keyword id="KW-0325">Glycoprotein</keyword>
<keyword id="KW-0472">Membrane</keyword>
<keyword id="KW-0675">Receptor</keyword>
<keyword id="KW-1185">Reference proteome</keyword>
<keyword id="KW-0807">Transducer</keyword>
<keyword id="KW-0812">Transmembrane</keyword>
<keyword id="KW-1133">Transmembrane helix</keyword>
<name>P2RY3_CHICK</name>
<dbReference type="EMBL" id="X98283">
    <property type="protein sequence ID" value="CAA66930.1"/>
    <property type="molecule type" value="mRNA"/>
</dbReference>
<dbReference type="RefSeq" id="NP_990526.1">
    <property type="nucleotide sequence ID" value="NM_205195.1"/>
</dbReference>
<dbReference type="SMR" id="Q98907"/>
<dbReference type="FunCoup" id="Q98907">
    <property type="interactions" value="170"/>
</dbReference>
<dbReference type="STRING" id="9031.ENSGALP00000070498"/>
<dbReference type="GlyCosmos" id="Q98907">
    <property type="glycosylation" value="1 site, No reported glycans"/>
</dbReference>
<dbReference type="GlyGen" id="Q98907">
    <property type="glycosylation" value="1 site"/>
</dbReference>
<dbReference type="PaxDb" id="9031-ENSGALP00000027948"/>
<dbReference type="Ensembl" id="ENSGALT00010006490.1">
    <property type="protein sequence ID" value="ENSGALP00010003996.1"/>
    <property type="gene ID" value="ENSGALG00010002807.1"/>
</dbReference>
<dbReference type="Ensembl" id="ENSGALT00010006500.1">
    <property type="protein sequence ID" value="ENSGALP00010004003.1"/>
    <property type="gene ID" value="ENSGALG00010002807.1"/>
</dbReference>
<dbReference type="Ensembl" id="ENSGALT00010006503.1">
    <property type="protein sequence ID" value="ENSGALP00010004004.1"/>
    <property type="gene ID" value="ENSGALG00010002807.1"/>
</dbReference>
<dbReference type="Ensembl" id="ENSGALT00010006510.1">
    <property type="protein sequence ID" value="ENSGALP00010004009.1"/>
    <property type="gene ID" value="ENSGALG00010002807.1"/>
</dbReference>
<dbReference type="Ensembl" id="ENSGALT00010006513.1">
    <property type="protein sequence ID" value="ENSGALP00010004012.1"/>
    <property type="gene ID" value="ENSGALG00010002807.1"/>
</dbReference>
<dbReference type="Ensembl" id="ENSGALT00010006517.1">
    <property type="protein sequence ID" value="ENSGALP00010004013.1"/>
    <property type="gene ID" value="ENSGALG00010002807.1"/>
</dbReference>
<dbReference type="Ensembl" id="ENSGALT00010006519.1">
    <property type="protein sequence ID" value="ENSGALP00010004014.1"/>
    <property type="gene ID" value="ENSGALG00010002807.1"/>
</dbReference>
<dbReference type="Ensembl" id="ENSGALT00010006523.1">
    <property type="protein sequence ID" value="ENSGALP00010004016.1"/>
    <property type="gene ID" value="ENSGALG00010002807.1"/>
</dbReference>
<dbReference type="GeneID" id="396114"/>
<dbReference type="KEGG" id="gga:396114"/>
<dbReference type="CTD" id="5031"/>
<dbReference type="VEuPathDB" id="HostDB:geneid_396114"/>
<dbReference type="eggNOG" id="ENOG502QRYJ">
    <property type="taxonomic scope" value="Eukaryota"/>
</dbReference>
<dbReference type="GeneTree" id="ENSGT01030000234621"/>
<dbReference type="HOGENOM" id="CLU_009579_8_2_1"/>
<dbReference type="InParanoid" id="Q98907"/>
<dbReference type="OMA" id="ICGGVWL"/>
<dbReference type="OrthoDB" id="9881476at2759"/>
<dbReference type="PhylomeDB" id="Q98907"/>
<dbReference type="TreeFam" id="TF330775"/>
<dbReference type="Reactome" id="R-GGA-416476">
    <property type="pathway name" value="G alpha (q) signalling events"/>
</dbReference>
<dbReference type="Reactome" id="R-GGA-417957">
    <property type="pathway name" value="P2Y receptors"/>
</dbReference>
<dbReference type="PRO" id="PR:Q98907"/>
<dbReference type="Proteomes" id="UP000000539">
    <property type="component" value="Chromosome 1"/>
</dbReference>
<dbReference type="Bgee" id="ENSGALG00000017327">
    <property type="expression patterns" value="Expressed in spleen and 11 other cell types or tissues"/>
</dbReference>
<dbReference type="GO" id="GO:0005886">
    <property type="term" value="C:plasma membrane"/>
    <property type="evidence" value="ECO:0000318"/>
    <property type="project" value="GO_Central"/>
</dbReference>
<dbReference type="GO" id="GO:0001621">
    <property type="term" value="F:G protein-coupled ADP receptor activity"/>
    <property type="evidence" value="ECO:0000318"/>
    <property type="project" value="GO_Central"/>
</dbReference>
<dbReference type="GO" id="GO:0045029">
    <property type="term" value="F:G protein-coupled UDP receptor activity"/>
    <property type="evidence" value="ECO:0000318"/>
    <property type="project" value="GO_Central"/>
</dbReference>
<dbReference type="GO" id="GO:0045030">
    <property type="term" value="F:G protein-coupled UTP receptor activity"/>
    <property type="evidence" value="ECO:0000318"/>
    <property type="project" value="GO_Central"/>
</dbReference>
<dbReference type="GO" id="GO:0071380">
    <property type="term" value="P:cellular response to prostaglandin E stimulus"/>
    <property type="evidence" value="ECO:0007669"/>
    <property type="project" value="Ensembl"/>
</dbReference>
<dbReference type="GO" id="GO:0071415">
    <property type="term" value="P:cellular response to purine-containing compound"/>
    <property type="evidence" value="ECO:0007669"/>
    <property type="project" value="Ensembl"/>
</dbReference>
<dbReference type="GO" id="GO:1905835">
    <property type="term" value="P:cellular response to pyrimidine ribonucleotide"/>
    <property type="evidence" value="ECO:0000318"/>
    <property type="project" value="GO_Central"/>
</dbReference>
<dbReference type="GO" id="GO:0007186">
    <property type="term" value="P:G protein-coupled receptor signaling pathway"/>
    <property type="evidence" value="ECO:0000318"/>
    <property type="project" value="GO_Central"/>
</dbReference>
<dbReference type="GO" id="GO:0007200">
    <property type="term" value="P:phospholipase C-activating G protein-coupled receptor signaling pathway"/>
    <property type="evidence" value="ECO:0007669"/>
    <property type="project" value="InterPro"/>
</dbReference>
<dbReference type="GO" id="GO:0070374">
    <property type="term" value="P:positive regulation of ERK1 and ERK2 cascade"/>
    <property type="evidence" value="ECO:0007669"/>
    <property type="project" value="Ensembl"/>
</dbReference>
<dbReference type="GO" id="GO:0032962">
    <property type="term" value="P:positive regulation of inositol trisphosphate biosynthetic process"/>
    <property type="evidence" value="ECO:0007669"/>
    <property type="project" value="Ensembl"/>
</dbReference>
<dbReference type="GO" id="GO:1904707">
    <property type="term" value="P:positive regulation of vascular associated smooth muscle cell proliferation"/>
    <property type="evidence" value="ECO:0007669"/>
    <property type="project" value="Ensembl"/>
</dbReference>
<dbReference type="GO" id="GO:0030321">
    <property type="term" value="P:transepithelial chloride transport"/>
    <property type="evidence" value="ECO:0007669"/>
    <property type="project" value="Ensembl"/>
</dbReference>
<dbReference type="CDD" id="cd15379">
    <property type="entry name" value="7tmA_P2Y6"/>
    <property type="match status" value="1"/>
</dbReference>
<dbReference type="FunFam" id="1.20.1070.10:FF:000017">
    <property type="entry name" value="lysophosphatidic acid receptor 4"/>
    <property type="match status" value="1"/>
</dbReference>
<dbReference type="Gene3D" id="1.20.1070.10">
    <property type="entry name" value="Rhodopsin 7-helix transmembrane proteins"/>
    <property type="match status" value="1"/>
</dbReference>
<dbReference type="InterPro" id="IPR000276">
    <property type="entry name" value="GPCR_Rhodpsn"/>
</dbReference>
<dbReference type="InterPro" id="IPR017452">
    <property type="entry name" value="GPCR_Rhodpsn_7TM"/>
</dbReference>
<dbReference type="InterPro" id="IPR000371">
    <property type="entry name" value="P2Y3_rcpt"/>
</dbReference>
<dbReference type="PANTHER" id="PTHR24231:SF16">
    <property type="entry name" value="P2Y PURINOCEPTOR 6"/>
    <property type="match status" value="1"/>
</dbReference>
<dbReference type="PANTHER" id="PTHR24231">
    <property type="entry name" value="PURINOCEPTOR-RELATED G-PROTEIN COUPLED RECEPTOR"/>
    <property type="match status" value="1"/>
</dbReference>
<dbReference type="Pfam" id="PF00001">
    <property type="entry name" value="7tm_1"/>
    <property type="match status" value="1"/>
</dbReference>
<dbReference type="PRINTS" id="PR00237">
    <property type="entry name" value="GPCRRHODOPSN"/>
</dbReference>
<dbReference type="PRINTS" id="PR01065">
    <property type="entry name" value="P2Y3PRNOCPTR"/>
</dbReference>
<dbReference type="PRINTS" id="PR01157">
    <property type="entry name" value="P2YPURNOCPTR"/>
</dbReference>
<dbReference type="SUPFAM" id="SSF81321">
    <property type="entry name" value="Family A G protein-coupled receptor-like"/>
    <property type="match status" value="1"/>
</dbReference>
<dbReference type="PROSITE" id="PS50262">
    <property type="entry name" value="G_PROTEIN_RECEP_F1_2"/>
    <property type="match status" value="1"/>
</dbReference>
<comment type="function">
    <text>Receptor for extracellular ADP &gt; UTP &gt; ATP = UDP. The activity of this receptor is mediated by G proteins which activate a phosphatidylinositol-calcium second messenger system.</text>
</comment>
<comment type="subcellular location">
    <subcellularLocation>
        <location>Cell membrane</location>
        <topology>Multi-pass membrane protein</topology>
    </subcellularLocation>
</comment>
<comment type="similarity">
    <text evidence="2">Belongs to the G-protein coupled receptor 1 family.</text>
</comment>